<organism>
    <name type="scientific">Clostridium botulinum (strain Alaska E43 / Type E3)</name>
    <dbReference type="NCBI Taxonomy" id="508767"/>
    <lineage>
        <taxon>Bacteria</taxon>
        <taxon>Bacillati</taxon>
        <taxon>Bacillota</taxon>
        <taxon>Clostridia</taxon>
        <taxon>Eubacteriales</taxon>
        <taxon>Clostridiaceae</taxon>
        <taxon>Clostridium</taxon>
    </lineage>
</organism>
<comment type="function">
    <text evidence="1">Attaches a formyl group to the free amino group of methionyl-tRNA(fMet). The formyl group appears to play a dual role in the initiator identity of N-formylmethionyl-tRNA by promoting its recognition by IF2 and preventing the misappropriation of this tRNA by the elongation apparatus.</text>
</comment>
<comment type="catalytic activity">
    <reaction evidence="1">
        <text>L-methionyl-tRNA(fMet) + (6R)-10-formyltetrahydrofolate = N-formyl-L-methionyl-tRNA(fMet) + (6S)-5,6,7,8-tetrahydrofolate + H(+)</text>
        <dbReference type="Rhea" id="RHEA:24380"/>
        <dbReference type="Rhea" id="RHEA-COMP:9952"/>
        <dbReference type="Rhea" id="RHEA-COMP:9953"/>
        <dbReference type="ChEBI" id="CHEBI:15378"/>
        <dbReference type="ChEBI" id="CHEBI:57453"/>
        <dbReference type="ChEBI" id="CHEBI:78530"/>
        <dbReference type="ChEBI" id="CHEBI:78844"/>
        <dbReference type="ChEBI" id="CHEBI:195366"/>
        <dbReference type="EC" id="2.1.2.9"/>
    </reaction>
</comment>
<comment type="similarity">
    <text evidence="1">Belongs to the Fmt family.</text>
</comment>
<accession>B2V4B2</accession>
<feature type="chain" id="PRO_1000098393" description="Methionyl-tRNA formyltransferase">
    <location>
        <begin position="1"/>
        <end position="309"/>
    </location>
</feature>
<feature type="binding site" evidence="1">
    <location>
        <begin position="109"/>
        <end position="112"/>
    </location>
    <ligand>
        <name>(6S)-5,6,7,8-tetrahydrofolate</name>
        <dbReference type="ChEBI" id="CHEBI:57453"/>
    </ligand>
</feature>
<dbReference type="EC" id="2.1.2.9" evidence="1"/>
<dbReference type="EMBL" id="CP001078">
    <property type="protein sequence ID" value="ACD52372.1"/>
    <property type="molecule type" value="Genomic_DNA"/>
</dbReference>
<dbReference type="RefSeq" id="WP_003369666.1">
    <property type="nucleotide sequence ID" value="NC_010723.1"/>
</dbReference>
<dbReference type="SMR" id="B2V4B2"/>
<dbReference type="KEGG" id="cbt:CLH_1167"/>
<dbReference type="HOGENOM" id="CLU_033347_1_1_9"/>
<dbReference type="GO" id="GO:0005829">
    <property type="term" value="C:cytosol"/>
    <property type="evidence" value="ECO:0007669"/>
    <property type="project" value="TreeGrafter"/>
</dbReference>
<dbReference type="GO" id="GO:0004479">
    <property type="term" value="F:methionyl-tRNA formyltransferase activity"/>
    <property type="evidence" value="ECO:0007669"/>
    <property type="project" value="UniProtKB-UniRule"/>
</dbReference>
<dbReference type="CDD" id="cd08646">
    <property type="entry name" value="FMT_core_Met-tRNA-FMT_N"/>
    <property type="match status" value="1"/>
</dbReference>
<dbReference type="CDD" id="cd08704">
    <property type="entry name" value="Met_tRNA_FMT_C"/>
    <property type="match status" value="1"/>
</dbReference>
<dbReference type="FunFam" id="3.40.50.12230:FF:000001">
    <property type="entry name" value="Methionyl-tRNA formyltransferase"/>
    <property type="match status" value="1"/>
</dbReference>
<dbReference type="Gene3D" id="3.10.25.10">
    <property type="entry name" value="Formyl transferase, C-terminal domain"/>
    <property type="match status" value="1"/>
</dbReference>
<dbReference type="Gene3D" id="3.40.50.170">
    <property type="entry name" value="Formyl transferase, N-terminal domain"/>
    <property type="match status" value="1"/>
</dbReference>
<dbReference type="HAMAP" id="MF_00182">
    <property type="entry name" value="Formyl_trans"/>
    <property type="match status" value="1"/>
</dbReference>
<dbReference type="InterPro" id="IPR005794">
    <property type="entry name" value="Fmt"/>
</dbReference>
<dbReference type="InterPro" id="IPR005793">
    <property type="entry name" value="Formyl_trans_C"/>
</dbReference>
<dbReference type="InterPro" id="IPR037022">
    <property type="entry name" value="Formyl_trans_C_sf"/>
</dbReference>
<dbReference type="InterPro" id="IPR002376">
    <property type="entry name" value="Formyl_transf_N"/>
</dbReference>
<dbReference type="InterPro" id="IPR036477">
    <property type="entry name" value="Formyl_transf_N_sf"/>
</dbReference>
<dbReference type="InterPro" id="IPR011034">
    <property type="entry name" value="Formyl_transferase-like_C_sf"/>
</dbReference>
<dbReference type="InterPro" id="IPR001555">
    <property type="entry name" value="GART_AS"/>
</dbReference>
<dbReference type="InterPro" id="IPR044135">
    <property type="entry name" value="Met-tRNA-FMT_C"/>
</dbReference>
<dbReference type="InterPro" id="IPR041711">
    <property type="entry name" value="Met-tRNA-FMT_N"/>
</dbReference>
<dbReference type="NCBIfam" id="TIGR00460">
    <property type="entry name" value="fmt"/>
    <property type="match status" value="1"/>
</dbReference>
<dbReference type="PANTHER" id="PTHR11138">
    <property type="entry name" value="METHIONYL-TRNA FORMYLTRANSFERASE"/>
    <property type="match status" value="1"/>
</dbReference>
<dbReference type="PANTHER" id="PTHR11138:SF5">
    <property type="entry name" value="METHIONYL-TRNA FORMYLTRANSFERASE, MITOCHONDRIAL"/>
    <property type="match status" value="1"/>
</dbReference>
<dbReference type="Pfam" id="PF02911">
    <property type="entry name" value="Formyl_trans_C"/>
    <property type="match status" value="1"/>
</dbReference>
<dbReference type="Pfam" id="PF00551">
    <property type="entry name" value="Formyl_trans_N"/>
    <property type="match status" value="1"/>
</dbReference>
<dbReference type="SUPFAM" id="SSF50486">
    <property type="entry name" value="FMT C-terminal domain-like"/>
    <property type="match status" value="1"/>
</dbReference>
<dbReference type="SUPFAM" id="SSF53328">
    <property type="entry name" value="Formyltransferase"/>
    <property type="match status" value="1"/>
</dbReference>
<dbReference type="PROSITE" id="PS00373">
    <property type="entry name" value="GART"/>
    <property type="match status" value="1"/>
</dbReference>
<keyword id="KW-0648">Protein biosynthesis</keyword>
<keyword id="KW-0808">Transferase</keyword>
<protein>
    <recommendedName>
        <fullName evidence="1">Methionyl-tRNA formyltransferase</fullName>
        <ecNumber evidence="1">2.1.2.9</ecNumber>
    </recommendedName>
</protein>
<reference key="1">
    <citation type="submission" date="2008-05" db="EMBL/GenBank/DDBJ databases">
        <title>Complete genome sequence of Clostridium botulinum E3 str. Alaska E43.</title>
        <authorList>
            <person name="Brinkac L.M."/>
            <person name="Brown J.L."/>
            <person name="Bruce D."/>
            <person name="Detter C."/>
            <person name="Munk C."/>
            <person name="Smith L.A."/>
            <person name="Smith T.J."/>
            <person name="Sutton G."/>
            <person name="Brettin T.S."/>
        </authorList>
    </citation>
    <scope>NUCLEOTIDE SEQUENCE [LARGE SCALE GENOMIC DNA]</scope>
    <source>
        <strain>Alaska E43 / Type E3</strain>
    </source>
</reference>
<name>FMT_CLOBA</name>
<proteinExistence type="inferred from homology"/>
<evidence type="ECO:0000255" key="1">
    <source>
        <dbReference type="HAMAP-Rule" id="MF_00182"/>
    </source>
</evidence>
<sequence length="309" mass="34853">MKIVFMGTPDFAVPSFRKLIEEHEVKAVLTQPDKPKGRGKKLAYSPVKEEALKYDIPVYQPTKLKDDKEIIEKLKEINPDFIIVVAFGQILTKEVLDIPKYGCINLHASLLPMYRGAAPLNWVIIKGEKKSGNTTMLMDVGLDTGDMLLKEEVEIHEDMTTGELHDILMISGGELLLKTIEGLCSGSIKPVKQEGETFYAKMLDKELAHINWTEDAYDIHNLVRGLNPWPIAYTEYKGERMKLYKTKVLYKEVSNKPGTIIEVNKEGVKVACGKNVLIIEKVQFPNGKPLTIEQYINGHSIEKDIILGE</sequence>
<gene>
    <name evidence="1" type="primary">fmt</name>
    <name type="ordered locus">CLH_1167</name>
</gene>